<dbReference type="EC" id="4.2.1.49" evidence="1"/>
<dbReference type="EMBL" id="CU234118">
    <property type="protein sequence ID" value="CAL75484.1"/>
    <property type="molecule type" value="Genomic_DNA"/>
</dbReference>
<dbReference type="RefSeq" id="WP_011924715.1">
    <property type="nucleotide sequence ID" value="NC_009445.1"/>
</dbReference>
<dbReference type="SMR" id="A4YNK8"/>
<dbReference type="STRING" id="114615.BRADO1605"/>
<dbReference type="KEGG" id="bra:BRADO1605"/>
<dbReference type="eggNOG" id="COG2987">
    <property type="taxonomic scope" value="Bacteria"/>
</dbReference>
<dbReference type="HOGENOM" id="CLU_018868_0_1_5"/>
<dbReference type="OrthoDB" id="9764874at2"/>
<dbReference type="UniPathway" id="UPA00379">
    <property type="reaction ID" value="UER00550"/>
</dbReference>
<dbReference type="Proteomes" id="UP000001994">
    <property type="component" value="Chromosome"/>
</dbReference>
<dbReference type="GO" id="GO:0005737">
    <property type="term" value="C:cytoplasm"/>
    <property type="evidence" value="ECO:0007669"/>
    <property type="project" value="UniProtKB-SubCell"/>
</dbReference>
<dbReference type="GO" id="GO:0016153">
    <property type="term" value="F:urocanate hydratase activity"/>
    <property type="evidence" value="ECO:0007669"/>
    <property type="project" value="UniProtKB-UniRule"/>
</dbReference>
<dbReference type="GO" id="GO:0019556">
    <property type="term" value="P:L-histidine catabolic process to glutamate and formamide"/>
    <property type="evidence" value="ECO:0007669"/>
    <property type="project" value="UniProtKB-UniPathway"/>
</dbReference>
<dbReference type="GO" id="GO:0019557">
    <property type="term" value="P:L-histidine catabolic process to glutamate and formate"/>
    <property type="evidence" value="ECO:0007669"/>
    <property type="project" value="UniProtKB-UniPathway"/>
</dbReference>
<dbReference type="FunFam" id="3.40.50.10730:FF:000001">
    <property type="entry name" value="Urocanate hydratase"/>
    <property type="match status" value="1"/>
</dbReference>
<dbReference type="Gene3D" id="3.40.50.10730">
    <property type="entry name" value="Urocanase like domains"/>
    <property type="match status" value="1"/>
</dbReference>
<dbReference type="Gene3D" id="3.40.1770.10">
    <property type="entry name" value="Urocanase superfamily"/>
    <property type="match status" value="1"/>
</dbReference>
<dbReference type="HAMAP" id="MF_00577">
    <property type="entry name" value="HutU"/>
    <property type="match status" value="1"/>
</dbReference>
<dbReference type="InterPro" id="IPR055351">
    <property type="entry name" value="Urocanase"/>
</dbReference>
<dbReference type="InterPro" id="IPR023637">
    <property type="entry name" value="Urocanase-like"/>
</dbReference>
<dbReference type="InterPro" id="IPR035401">
    <property type="entry name" value="Urocanase_C"/>
</dbReference>
<dbReference type="InterPro" id="IPR038364">
    <property type="entry name" value="Urocanase_central_sf"/>
</dbReference>
<dbReference type="InterPro" id="IPR023636">
    <property type="entry name" value="Urocanase_CS"/>
</dbReference>
<dbReference type="InterPro" id="IPR035400">
    <property type="entry name" value="Urocanase_N"/>
</dbReference>
<dbReference type="InterPro" id="IPR035085">
    <property type="entry name" value="Urocanase_Rossmann-like"/>
</dbReference>
<dbReference type="InterPro" id="IPR036190">
    <property type="entry name" value="Urocanase_sf"/>
</dbReference>
<dbReference type="NCBIfam" id="TIGR01228">
    <property type="entry name" value="hutU"/>
    <property type="match status" value="1"/>
</dbReference>
<dbReference type="NCBIfam" id="NF003820">
    <property type="entry name" value="PRK05414.1"/>
    <property type="match status" value="1"/>
</dbReference>
<dbReference type="PANTHER" id="PTHR12216">
    <property type="entry name" value="UROCANATE HYDRATASE"/>
    <property type="match status" value="1"/>
</dbReference>
<dbReference type="PANTHER" id="PTHR12216:SF4">
    <property type="entry name" value="UROCANATE HYDRATASE"/>
    <property type="match status" value="1"/>
</dbReference>
<dbReference type="Pfam" id="PF01175">
    <property type="entry name" value="Urocanase"/>
    <property type="match status" value="1"/>
</dbReference>
<dbReference type="Pfam" id="PF17392">
    <property type="entry name" value="Urocanase_C"/>
    <property type="match status" value="1"/>
</dbReference>
<dbReference type="Pfam" id="PF17391">
    <property type="entry name" value="Urocanase_N"/>
    <property type="match status" value="1"/>
</dbReference>
<dbReference type="PIRSF" id="PIRSF001423">
    <property type="entry name" value="Urocanate_hydrat"/>
    <property type="match status" value="1"/>
</dbReference>
<dbReference type="SUPFAM" id="SSF111326">
    <property type="entry name" value="Urocanase"/>
    <property type="match status" value="1"/>
</dbReference>
<dbReference type="PROSITE" id="PS01233">
    <property type="entry name" value="UROCANASE"/>
    <property type="match status" value="1"/>
</dbReference>
<comment type="function">
    <text evidence="1">Catalyzes the conversion of urocanate to 4-imidazolone-5-propionate.</text>
</comment>
<comment type="catalytic activity">
    <reaction evidence="1">
        <text>4-imidazolone-5-propanoate = trans-urocanate + H2O</text>
        <dbReference type="Rhea" id="RHEA:13101"/>
        <dbReference type="ChEBI" id="CHEBI:15377"/>
        <dbReference type="ChEBI" id="CHEBI:17771"/>
        <dbReference type="ChEBI" id="CHEBI:77893"/>
        <dbReference type="EC" id="4.2.1.49"/>
    </reaction>
</comment>
<comment type="cofactor">
    <cofactor evidence="1">
        <name>NAD(+)</name>
        <dbReference type="ChEBI" id="CHEBI:57540"/>
    </cofactor>
    <text evidence="1">Binds 1 NAD(+) per subunit.</text>
</comment>
<comment type="pathway">
    <text evidence="1">Amino-acid degradation; L-histidine degradation into L-glutamate; N-formimidoyl-L-glutamate from L-histidine: step 2/3.</text>
</comment>
<comment type="subcellular location">
    <subcellularLocation>
        <location evidence="1">Cytoplasm</location>
    </subcellularLocation>
</comment>
<comment type="similarity">
    <text evidence="1">Belongs to the urocanase family.</text>
</comment>
<evidence type="ECO:0000255" key="1">
    <source>
        <dbReference type="HAMAP-Rule" id="MF_00577"/>
    </source>
</evidence>
<keyword id="KW-0963">Cytoplasm</keyword>
<keyword id="KW-0369">Histidine metabolism</keyword>
<keyword id="KW-0456">Lyase</keyword>
<keyword id="KW-0520">NAD</keyword>
<keyword id="KW-1185">Reference proteome</keyword>
<accession>A4YNK8</accession>
<proteinExistence type="inferred from homology"/>
<reference key="1">
    <citation type="journal article" date="2007" name="Science">
        <title>Legumes symbioses: absence of nod genes in photosynthetic bradyrhizobia.</title>
        <authorList>
            <person name="Giraud E."/>
            <person name="Moulin L."/>
            <person name="Vallenet D."/>
            <person name="Barbe V."/>
            <person name="Cytryn E."/>
            <person name="Avarre J.-C."/>
            <person name="Jaubert M."/>
            <person name="Simon D."/>
            <person name="Cartieaux F."/>
            <person name="Prin Y."/>
            <person name="Bena G."/>
            <person name="Hannibal L."/>
            <person name="Fardoux J."/>
            <person name="Kojadinovic M."/>
            <person name="Vuillet L."/>
            <person name="Lajus A."/>
            <person name="Cruveiller S."/>
            <person name="Rouy Z."/>
            <person name="Mangenot S."/>
            <person name="Segurens B."/>
            <person name="Dossat C."/>
            <person name="Franck W.L."/>
            <person name="Chang W.-S."/>
            <person name="Saunders E."/>
            <person name="Bruce D."/>
            <person name="Richardson P."/>
            <person name="Normand P."/>
            <person name="Dreyfus B."/>
            <person name="Pignol D."/>
            <person name="Stacey G."/>
            <person name="Emerich D."/>
            <person name="Vermeglio A."/>
            <person name="Medigue C."/>
            <person name="Sadowsky M."/>
        </authorList>
    </citation>
    <scope>NUCLEOTIDE SEQUENCE [LARGE SCALE GENOMIC DNA]</scope>
    <source>
        <strain>ORS 278</strain>
    </source>
</reference>
<protein>
    <recommendedName>
        <fullName evidence="1">Urocanate hydratase</fullName>
        <shortName evidence="1">Urocanase</shortName>
        <ecNumber evidence="1">4.2.1.49</ecNumber>
    </recommendedName>
    <alternativeName>
        <fullName evidence="1">Imidazolonepropionate hydrolase</fullName>
    </alternativeName>
</protein>
<organism>
    <name type="scientific">Bradyrhizobium sp. (strain ORS 278)</name>
    <dbReference type="NCBI Taxonomy" id="114615"/>
    <lineage>
        <taxon>Bacteria</taxon>
        <taxon>Pseudomonadati</taxon>
        <taxon>Pseudomonadota</taxon>
        <taxon>Alphaproteobacteria</taxon>
        <taxon>Hyphomicrobiales</taxon>
        <taxon>Nitrobacteraceae</taxon>
        <taxon>Bradyrhizobium</taxon>
    </lineage>
</organism>
<gene>
    <name evidence="1" type="primary">hutU</name>
    <name type="ordered locus">BRADO1605</name>
</gene>
<feature type="chain" id="PRO_1000025123" description="Urocanate hydratase">
    <location>
        <begin position="1"/>
        <end position="556"/>
    </location>
</feature>
<feature type="active site" evidence="1">
    <location>
        <position position="410"/>
    </location>
</feature>
<feature type="binding site" evidence="1">
    <location>
        <begin position="52"/>
        <end position="53"/>
    </location>
    <ligand>
        <name>NAD(+)</name>
        <dbReference type="ChEBI" id="CHEBI:57540"/>
    </ligand>
</feature>
<feature type="binding site" evidence="1">
    <location>
        <position position="130"/>
    </location>
    <ligand>
        <name>NAD(+)</name>
        <dbReference type="ChEBI" id="CHEBI:57540"/>
    </ligand>
</feature>
<feature type="binding site" evidence="1">
    <location>
        <begin position="176"/>
        <end position="178"/>
    </location>
    <ligand>
        <name>NAD(+)</name>
        <dbReference type="ChEBI" id="CHEBI:57540"/>
    </ligand>
</feature>
<feature type="binding site" evidence="1">
    <location>
        <position position="196"/>
    </location>
    <ligand>
        <name>NAD(+)</name>
        <dbReference type="ChEBI" id="CHEBI:57540"/>
    </ligand>
</feature>
<feature type="binding site" evidence="1">
    <location>
        <position position="201"/>
    </location>
    <ligand>
        <name>NAD(+)</name>
        <dbReference type="ChEBI" id="CHEBI:57540"/>
    </ligand>
</feature>
<feature type="binding site" evidence="1">
    <location>
        <begin position="242"/>
        <end position="243"/>
    </location>
    <ligand>
        <name>NAD(+)</name>
        <dbReference type="ChEBI" id="CHEBI:57540"/>
    </ligand>
</feature>
<feature type="binding site" evidence="1">
    <location>
        <begin position="263"/>
        <end position="267"/>
    </location>
    <ligand>
        <name>NAD(+)</name>
        <dbReference type="ChEBI" id="CHEBI:57540"/>
    </ligand>
</feature>
<feature type="binding site" evidence="1">
    <location>
        <begin position="273"/>
        <end position="274"/>
    </location>
    <ligand>
        <name>NAD(+)</name>
        <dbReference type="ChEBI" id="CHEBI:57540"/>
    </ligand>
</feature>
<feature type="binding site" evidence="1">
    <location>
        <position position="322"/>
    </location>
    <ligand>
        <name>NAD(+)</name>
        <dbReference type="ChEBI" id="CHEBI:57540"/>
    </ligand>
</feature>
<feature type="binding site" evidence="1">
    <location>
        <position position="492"/>
    </location>
    <ligand>
        <name>NAD(+)</name>
        <dbReference type="ChEBI" id="CHEBI:57540"/>
    </ligand>
</feature>
<sequence>MNRRLDNQRVIRAPHGSDISAKSWLTEAPLRMLMNNLDPDVAEKPSELIVYGGIGRAARDWDSFDRIVASLRKLEADQTLVVQSGKPVGIFRTHPDAPRVLIANSNIVPHWATLDHFNALDKMGLMMYGQMTAGSWIYIGSQGIVQGTYETFVEVGRRHYNGDLSGKWILTAGLGGMGGAQPLAATMAGASMLAVECQPSRIEMRLRTGYLDRQAASLDEALALMEEAARTKTAVSVGLLGNAAEIFPELVRRGVRPDIVTDQTSAHDPINGYLPKGWTLAEWEAKRASEPKAVEQASKTSMVGHVQAMLDFHAMGIPTLDYGNNIRQMAKDMGLANAFDFPGFVPAYIRPLFCRGIGPFRWAALSGDPEDIYKTDAKVKELLPDNKHLHNWLDMARQRIKFQGLPARICWVGLGDRHRLGLAFNEMVARGELKAPIVIGRDHLDSGSVASPNRETEAMKDGSDAVSDWPLLNALLNCASGATWVSLHHGGGVGIGYSQHAGMVIVADGTDDAARRLERVLWNDPATGVMRHADAGYDDAIGCAEANGLDLPSLAR</sequence>
<name>HUTU_BRASO</name>